<evidence type="ECO:0000250" key="1"/>
<evidence type="ECO:0000256" key="2">
    <source>
        <dbReference type="SAM" id="MobiDB-lite"/>
    </source>
</evidence>
<evidence type="ECO:0000305" key="3"/>
<sequence>MAGNDWINSYLEAILDVGPGLDDKKSSLLLRERGRFSPTRYFVEEVITGFDETDLHRSWIRAQATRSPQRRNTRLENMCWRIWNLARQKKQLEGEQAQWMAKRRQERERGRREAVADMSEDLSEGEKGDIVADMSSHGESTRGRLPRISSVETMEAWVSQQRGKKLYIVLISLHGLIRGENMELGRDSDTGGQVKYVVELARALGSMPGVYRVDLLTRQVSSPEVDWSYGEPTELAPISTDGLMTEMGESSGAYIIRIPFGPREKYIPKEQLWPYIPEFVDGALNHIIQMSKVLGEQIGSGYPVWPVAIHGHYADAGDSAALLSGALNVPMLFTGHSLGRDKLEQLLAQGRKSKDEINSTYKIMRRIEAEELTLDASEIVITSTRQEIDEQWRLYDGFDPILERKLRARIKRNVSCYGRFMPRMAVIPPGMEFHHIVPHEGDMDGETEGSEDGKTPDPPIWAEIMRFFSNPRKPMILALARPDPKKNLTTLVKAFGECRPLRDLANLTLIMGNRDNIDEMSSTNSALLLSILKMIDKYDLYGQVAYPKHHKQSDVPDIYRLAAKTKGVFINPAFIEPFGLTLIEAAAYGLPMVATKNGGPVDIHRVLDNGLLVDPHDQQAIADALLKLVADKQLWAKCRANGLKNIHLFSWPEHCKTYLSRIASCKPRQPRWLRSIDDDDENSETDSPSDSLRDIHDISLNLRFSLDGEKNDNKENADNTLDPEVRRSKLENAVLSLSKGALKSTSKSWSSDKADQNPGAGKFPAIRRRRHIFVIAVDCDASSGLSGSVKKIFEAVEKERAEGSIGFILATSFNISEVQSFLLSEGMNPTDFDAYICNSGGDLYYSSFHSEQNPFVVDLYYHSHIEYRWGGEGLRKTLVRWAASIIDKNGENGDHIVVEDEDNSADYCYTFKVCKPGTVPPSKELRKVMRIQALRCHAVYCQNGSRINVIPVLASRSQALRYLYLRWGMDLSKLVVFVGESGDTDYEGLIGGLRKAVIMKGLCTNASSLIHGNRNYPLSDVLPFDSPNVIQADEECSSTEIRCLLEKLAVLKG</sequence>
<name>SPSA_SOLTU</name>
<keyword id="KW-0328">Glycosyltransferase</keyword>
<keyword id="KW-1185">Reference proteome</keyword>
<keyword id="KW-0808">Transferase</keyword>
<organism>
    <name type="scientific">Solanum tuberosum</name>
    <name type="common">Potato</name>
    <dbReference type="NCBI Taxonomy" id="4113"/>
    <lineage>
        <taxon>Eukaryota</taxon>
        <taxon>Viridiplantae</taxon>
        <taxon>Streptophyta</taxon>
        <taxon>Embryophyta</taxon>
        <taxon>Tracheophyta</taxon>
        <taxon>Spermatophyta</taxon>
        <taxon>Magnoliopsida</taxon>
        <taxon>eudicotyledons</taxon>
        <taxon>Gunneridae</taxon>
        <taxon>Pentapetalae</taxon>
        <taxon>asterids</taxon>
        <taxon>lamiids</taxon>
        <taxon>Solanales</taxon>
        <taxon>Solanaceae</taxon>
        <taxon>Solanoideae</taxon>
        <taxon>Solaneae</taxon>
        <taxon>Solanum</taxon>
    </lineage>
</organism>
<dbReference type="EC" id="2.4.1.14"/>
<dbReference type="EMBL" id="X73477">
    <property type="protein sequence ID" value="CAA51872.1"/>
    <property type="molecule type" value="mRNA"/>
</dbReference>
<dbReference type="PIR" id="S34172">
    <property type="entry name" value="S34172"/>
</dbReference>
<dbReference type="SMR" id="Q43845"/>
<dbReference type="FunCoup" id="Q43845">
    <property type="interactions" value="427"/>
</dbReference>
<dbReference type="STRING" id="4113.Q43845"/>
<dbReference type="CAZy" id="GT4">
    <property type="family name" value="Glycosyltransferase Family 4"/>
</dbReference>
<dbReference type="PaxDb" id="4113-PGSC0003DMT400071807"/>
<dbReference type="eggNOG" id="KOG0853">
    <property type="taxonomic scope" value="Eukaryota"/>
</dbReference>
<dbReference type="InParanoid" id="Q43845"/>
<dbReference type="UniPathway" id="UPA00371">
    <property type="reaction ID" value="UER00545"/>
</dbReference>
<dbReference type="Proteomes" id="UP000011115">
    <property type="component" value="Unassembled WGS sequence"/>
</dbReference>
<dbReference type="ExpressionAtlas" id="Q43845">
    <property type="expression patterns" value="baseline and differential"/>
</dbReference>
<dbReference type="GO" id="GO:0046524">
    <property type="term" value="F:sucrose-phosphate synthase activity"/>
    <property type="evidence" value="ECO:0007669"/>
    <property type="project" value="UniProtKB-EC"/>
</dbReference>
<dbReference type="GO" id="GO:0005986">
    <property type="term" value="P:sucrose biosynthetic process"/>
    <property type="evidence" value="ECO:0007669"/>
    <property type="project" value="UniProtKB-UniPathway"/>
</dbReference>
<dbReference type="CDD" id="cd03800">
    <property type="entry name" value="GT4_sucrose_synthase"/>
    <property type="match status" value="1"/>
</dbReference>
<dbReference type="CDD" id="cd16419">
    <property type="entry name" value="HAD_SPS"/>
    <property type="match status" value="1"/>
</dbReference>
<dbReference type="FunFam" id="3.40.50.2000:FF:000112">
    <property type="entry name" value="Sucrose-phosphate synthase 1"/>
    <property type="match status" value="1"/>
</dbReference>
<dbReference type="Gene3D" id="3.40.50.2000">
    <property type="entry name" value="Glycogen Phosphorylase B"/>
    <property type="match status" value="2"/>
</dbReference>
<dbReference type="InterPro" id="IPR001296">
    <property type="entry name" value="Glyco_trans_1"/>
</dbReference>
<dbReference type="InterPro" id="IPR006380">
    <property type="entry name" value="SPP-like_dom"/>
</dbReference>
<dbReference type="InterPro" id="IPR044161">
    <property type="entry name" value="SPS"/>
</dbReference>
<dbReference type="InterPro" id="IPR035659">
    <property type="entry name" value="SPS_C"/>
</dbReference>
<dbReference type="InterPro" id="IPR012819">
    <property type="entry name" value="SPS_pln"/>
</dbReference>
<dbReference type="InterPro" id="IPR000368">
    <property type="entry name" value="Sucrose_synth_GT-B1"/>
</dbReference>
<dbReference type="NCBIfam" id="TIGR02468">
    <property type="entry name" value="sucrsPsyn_pln"/>
    <property type="match status" value="1"/>
</dbReference>
<dbReference type="PANTHER" id="PTHR46039:SF2">
    <property type="entry name" value="SUCROSE-PHOSPHATE SYNTHASE 1"/>
    <property type="match status" value="1"/>
</dbReference>
<dbReference type="PANTHER" id="PTHR46039">
    <property type="entry name" value="SUCROSE-PHOSPHATE SYNTHASE 3-RELATED"/>
    <property type="match status" value="1"/>
</dbReference>
<dbReference type="Pfam" id="PF00534">
    <property type="entry name" value="Glycos_transf_1"/>
    <property type="match status" value="1"/>
</dbReference>
<dbReference type="Pfam" id="PF00862">
    <property type="entry name" value="GT-B_Sucrose_synth"/>
    <property type="match status" value="1"/>
</dbReference>
<dbReference type="Pfam" id="PF05116">
    <property type="entry name" value="S6PP"/>
    <property type="match status" value="1"/>
</dbReference>
<dbReference type="SUPFAM" id="SSF53756">
    <property type="entry name" value="UDP-Glycosyltransferase/glycogen phosphorylase"/>
    <property type="match status" value="1"/>
</dbReference>
<proteinExistence type="evidence at transcript level"/>
<gene>
    <name type="primary">SPS</name>
</gene>
<reference key="1">
    <citation type="journal article" date="1995" name="Plant J.">
        <title>Evidence of the crucial role of sucrose synthase for sink strength using transgenic potato plants (Solanum tuberosum L.).</title>
        <authorList>
            <person name="Zrenner R."/>
            <person name="Salanoubat M."/>
            <person name="Willmitzer L."/>
            <person name="Sonnewald U."/>
        </authorList>
    </citation>
    <scope>NUCLEOTIDE SEQUENCE [MRNA]</scope>
    <source>
        <strain>cv. Desiree</strain>
        <tissue>Leaf</tissue>
    </source>
</reference>
<protein>
    <recommendedName>
        <fullName>Probable sucrose-phosphate synthase</fullName>
        <ecNumber>2.4.1.14</ecNumber>
    </recommendedName>
    <alternativeName>
        <fullName>UDP-glucose-fructose-phosphate glucosyltransferase</fullName>
    </alternativeName>
</protein>
<accession>Q43845</accession>
<comment type="function">
    <text evidence="1">Plays a role in photosynthetic sucrose synthesis by catalyzing the rate-limiting step of sucrose biosynthesis from UDP-glucose and fructose- 6-phosphate. Involved in the regulation of carbon partitioning in the leaves of plants. May regulate the synthesis of sucrose and therefore play a major role as a limiting factor in the export of photoassimilates out of the leaf. Plays a role for sucrose availability that is essential for plant growth and fiber elongation (By similarity).</text>
</comment>
<comment type="catalytic activity">
    <reaction>
        <text>beta-D-fructose 6-phosphate + UDP-alpha-D-glucose = sucrose 6(F)-phosphate + UDP + H(+)</text>
        <dbReference type="Rhea" id="RHEA:22172"/>
        <dbReference type="ChEBI" id="CHEBI:15378"/>
        <dbReference type="ChEBI" id="CHEBI:57634"/>
        <dbReference type="ChEBI" id="CHEBI:57723"/>
        <dbReference type="ChEBI" id="CHEBI:58223"/>
        <dbReference type="ChEBI" id="CHEBI:58885"/>
        <dbReference type="EC" id="2.4.1.14"/>
    </reaction>
</comment>
<comment type="activity regulation">
    <text evidence="1">Activity is regulated by phosphorylation and moderated by concentration of metabolites and light.</text>
</comment>
<comment type="pathway">
    <text>Glycan biosynthesis; sucrose biosynthesis; sucrose from D-fructose 6-phosphate and UDP-alpha-D-glucose: step 1/2.</text>
</comment>
<comment type="subunit">
    <text evidence="1">Homodimer or homotetramer.</text>
</comment>
<comment type="similarity">
    <text evidence="3">Belongs to the glycosyltransferase 1 family.</text>
</comment>
<feature type="chain" id="PRO_0000204673" description="Probable sucrose-phosphate synthase">
    <location>
        <begin position="1"/>
        <end position="1053"/>
    </location>
</feature>
<feature type="region of interest" description="Disordered" evidence="2">
    <location>
        <begin position="103"/>
        <end position="127"/>
    </location>
</feature>
<feature type="region of interest" description="Disordered" evidence="2">
    <location>
        <begin position="673"/>
        <end position="693"/>
    </location>
</feature>
<feature type="compositionally biased region" description="Basic and acidic residues" evidence="2">
    <location>
        <begin position="103"/>
        <end position="115"/>
    </location>
</feature>